<keyword id="KW-1185">Reference proteome</keyword>
<keyword id="KW-0687">Ribonucleoprotein</keyword>
<keyword id="KW-0689">Ribosomal protein</keyword>
<organism>
    <name type="scientific">Nitrobacter winogradskyi (strain ATCC 25391 / DSM 10237 / CIP 104748 / NCIMB 11846 / Nb-255)</name>
    <dbReference type="NCBI Taxonomy" id="323098"/>
    <lineage>
        <taxon>Bacteria</taxon>
        <taxon>Pseudomonadati</taxon>
        <taxon>Pseudomonadota</taxon>
        <taxon>Alphaproteobacteria</taxon>
        <taxon>Hyphomicrobiales</taxon>
        <taxon>Nitrobacteraceae</taxon>
        <taxon>Nitrobacter</taxon>
    </lineage>
</organism>
<reference key="1">
    <citation type="journal article" date="2006" name="Appl. Environ. Microbiol.">
        <title>Genome sequence of the chemolithoautotrophic nitrite-oxidizing bacterium Nitrobacter winogradskyi Nb-255.</title>
        <authorList>
            <person name="Starkenburg S.R."/>
            <person name="Chain P.S.G."/>
            <person name="Sayavedra-Soto L.A."/>
            <person name="Hauser L."/>
            <person name="Land M.L."/>
            <person name="Larimer F.W."/>
            <person name="Malfatti S.A."/>
            <person name="Klotz M.G."/>
            <person name="Bottomley P.J."/>
            <person name="Arp D.J."/>
            <person name="Hickey W.J."/>
        </authorList>
    </citation>
    <scope>NUCLEOTIDE SEQUENCE [LARGE SCALE GENOMIC DNA]</scope>
    <source>
        <strain>ATCC 25391 / DSM 10237 / CIP 104748 / NCIMB 11846 / Nb-255</strain>
    </source>
</reference>
<sequence length="332" mass="36090">MAIPEFTMRQLLEAGVHFGHQSHRWNPKMAEYIFGARNNIHIIDLAQTVPLLHHALQAVSDTVARGGRILFVGTKRQAQDGVADAAKRSAQYFVNSRWLGGTLTNWKTISGSIKRLRHLDEVLNSGDANAYTKKERLTLQRERDKLDRSLGGIKDMGGLPDLMFVIDTNKEDIAIQEAQRLNIPVAAIVDTNCDPKGITYIVPGNDDAGRAISLYCDLIARAAIDGISRAQGESGIDVGASVQPVQEEIPAAAQPAGFQGLAGPRGVADDLKKLTGVSGAIEKKFNDLGIFHYWQLAELDHDTAHRIGEEVGLPSRADGWVAQAKAMTAEAE</sequence>
<accession>Q3SRH2</accession>
<feature type="chain" id="PRO_1000004010" description="Small ribosomal subunit protein uS2">
    <location>
        <begin position="1"/>
        <end position="332"/>
    </location>
</feature>
<protein>
    <recommendedName>
        <fullName evidence="1">Small ribosomal subunit protein uS2</fullName>
    </recommendedName>
    <alternativeName>
        <fullName evidence="2">30S ribosomal protein S2</fullName>
    </alternativeName>
</protein>
<gene>
    <name evidence="1" type="primary">rpsB</name>
    <name type="ordered locus">Nwi_1859</name>
</gene>
<comment type="similarity">
    <text evidence="1">Belongs to the universal ribosomal protein uS2 family.</text>
</comment>
<name>RS2_NITWN</name>
<dbReference type="EMBL" id="CP000115">
    <property type="protein sequence ID" value="ABA05119.1"/>
    <property type="molecule type" value="Genomic_DNA"/>
</dbReference>
<dbReference type="RefSeq" id="WP_011315115.1">
    <property type="nucleotide sequence ID" value="NC_007406.1"/>
</dbReference>
<dbReference type="SMR" id="Q3SRH2"/>
<dbReference type="STRING" id="323098.Nwi_1859"/>
<dbReference type="KEGG" id="nwi:Nwi_1859"/>
<dbReference type="eggNOG" id="COG0052">
    <property type="taxonomic scope" value="Bacteria"/>
</dbReference>
<dbReference type="HOGENOM" id="CLU_040318_2_1_5"/>
<dbReference type="OrthoDB" id="9808036at2"/>
<dbReference type="Proteomes" id="UP000002531">
    <property type="component" value="Chromosome"/>
</dbReference>
<dbReference type="GO" id="GO:0022627">
    <property type="term" value="C:cytosolic small ribosomal subunit"/>
    <property type="evidence" value="ECO:0007669"/>
    <property type="project" value="TreeGrafter"/>
</dbReference>
<dbReference type="GO" id="GO:0003735">
    <property type="term" value="F:structural constituent of ribosome"/>
    <property type="evidence" value="ECO:0007669"/>
    <property type="project" value="InterPro"/>
</dbReference>
<dbReference type="GO" id="GO:0006412">
    <property type="term" value="P:translation"/>
    <property type="evidence" value="ECO:0007669"/>
    <property type="project" value="UniProtKB-UniRule"/>
</dbReference>
<dbReference type="CDD" id="cd01425">
    <property type="entry name" value="RPS2"/>
    <property type="match status" value="1"/>
</dbReference>
<dbReference type="FunFam" id="1.10.287.610:FF:000001">
    <property type="entry name" value="30S ribosomal protein S2"/>
    <property type="match status" value="1"/>
</dbReference>
<dbReference type="Gene3D" id="3.40.50.10490">
    <property type="entry name" value="Glucose-6-phosphate isomerase like protein, domain 1"/>
    <property type="match status" value="1"/>
</dbReference>
<dbReference type="Gene3D" id="1.10.287.610">
    <property type="entry name" value="Helix hairpin bin"/>
    <property type="match status" value="1"/>
</dbReference>
<dbReference type="HAMAP" id="MF_00291_B">
    <property type="entry name" value="Ribosomal_uS2_B"/>
    <property type="match status" value="1"/>
</dbReference>
<dbReference type="InterPro" id="IPR001865">
    <property type="entry name" value="Ribosomal_uS2"/>
</dbReference>
<dbReference type="InterPro" id="IPR005706">
    <property type="entry name" value="Ribosomal_uS2_bac/mit/plastid"/>
</dbReference>
<dbReference type="InterPro" id="IPR018130">
    <property type="entry name" value="Ribosomal_uS2_CS"/>
</dbReference>
<dbReference type="InterPro" id="IPR023591">
    <property type="entry name" value="Ribosomal_uS2_flav_dom_sf"/>
</dbReference>
<dbReference type="NCBIfam" id="NF008966">
    <property type="entry name" value="PRK12311.1"/>
    <property type="match status" value="1"/>
</dbReference>
<dbReference type="NCBIfam" id="TIGR01011">
    <property type="entry name" value="rpsB_bact"/>
    <property type="match status" value="1"/>
</dbReference>
<dbReference type="PANTHER" id="PTHR12534">
    <property type="entry name" value="30S RIBOSOMAL PROTEIN S2 PROKARYOTIC AND ORGANELLAR"/>
    <property type="match status" value="1"/>
</dbReference>
<dbReference type="PANTHER" id="PTHR12534:SF0">
    <property type="entry name" value="SMALL RIBOSOMAL SUBUNIT PROTEIN US2M"/>
    <property type="match status" value="1"/>
</dbReference>
<dbReference type="Pfam" id="PF00318">
    <property type="entry name" value="Ribosomal_S2"/>
    <property type="match status" value="1"/>
</dbReference>
<dbReference type="PRINTS" id="PR00395">
    <property type="entry name" value="RIBOSOMALS2"/>
</dbReference>
<dbReference type="SUPFAM" id="SSF52313">
    <property type="entry name" value="Ribosomal protein S2"/>
    <property type="match status" value="1"/>
</dbReference>
<dbReference type="PROSITE" id="PS00962">
    <property type="entry name" value="RIBOSOMAL_S2_1"/>
    <property type="match status" value="1"/>
</dbReference>
<dbReference type="PROSITE" id="PS00963">
    <property type="entry name" value="RIBOSOMAL_S2_2"/>
    <property type="match status" value="1"/>
</dbReference>
<proteinExistence type="inferred from homology"/>
<evidence type="ECO:0000255" key="1">
    <source>
        <dbReference type="HAMAP-Rule" id="MF_00291"/>
    </source>
</evidence>
<evidence type="ECO:0000305" key="2"/>